<comment type="catalytic activity">
    <reaction evidence="3">
        <text>L-glutamate + NAD(+) + H2O = 2-oxoglutarate + NH4(+) + NADH + H(+)</text>
        <dbReference type="Rhea" id="RHEA:15133"/>
        <dbReference type="ChEBI" id="CHEBI:15377"/>
        <dbReference type="ChEBI" id="CHEBI:15378"/>
        <dbReference type="ChEBI" id="CHEBI:16810"/>
        <dbReference type="ChEBI" id="CHEBI:28938"/>
        <dbReference type="ChEBI" id="CHEBI:29985"/>
        <dbReference type="ChEBI" id="CHEBI:57540"/>
        <dbReference type="ChEBI" id="CHEBI:57945"/>
        <dbReference type="EC" id="1.4.1.3"/>
    </reaction>
</comment>
<comment type="catalytic activity">
    <reaction evidence="3">
        <text>L-glutamate + NADP(+) + H2O = 2-oxoglutarate + NH4(+) + NADPH + H(+)</text>
        <dbReference type="Rhea" id="RHEA:11612"/>
        <dbReference type="ChEBI" id="CHEBI:15377"/>
        <dbReference type="ChEBI" id="CHEBI:15378"/>
        <dbReference type="ChEBI" id="CHEBI:16810"/>
        <dbReference type="ChEBI" id="CHEBI:28938"/>
        <dbReference type="ChEBI" id="CHEBI:29985"/>
        <dbReference type="ChEBI" id="CHEBI:57783"/>
        <dbReference type="ChEBI" id="CHEBI:58349"/>
        <dbReference type="EC" id="1.4.1.3"/>
    </reaction>
</comment>
<comment type="subunit">
    <text evidence="1">Homohexamer.</text>
</comment>
<comment type="subcellular location">
    <subcellularLocation>
        <location evidence="1">Cytoplasm</location>
    </subcellularLocation>
</comment>
<comment type="similarity">
    <text evidence="4">Belongs to the Glu/Leu/Phe/Val dehydrogenases family.</text>
</comment>
<evidence type="ECO:0000250" key="1"/>
<evidence type="ECO:0000255" key="2"/>
<evidence type="ECO:0000255" key="3">
    <source>
        <dbReference type="PROSITE-ProRule" id="PRU10011"/>
    </source>
</evidence>
<evidence type="ECO:0000305" key="4"/>
<name>DHE3_AERPE</name>
<organism>
    <name type="scientific">Aeropyrum pernix (strain ATCC 700893 / DSM 11879 / JCM 9820 / NBRC 100138 / K1)</name>
    <dbReference type="NCBI Taxonomy" id="272557"/>
    <lineage>
        <taxon>Archaea</taxon>
        <taxon>Thermoproteota</taxon>
        <taxon>Thermoprotei</taxon>
        <taxon>Desulfurococcales</taxon>
        <taxon>Desulfurococcaceae</taxon>
        <taxon>Aeropyrum</taxon>
    </lineage>
</organism>
<sequence length="418" mass="46171">MQPTDPLEEARAQLRRAVDLLGYDDYVYEVLANPDRVLQVRVTIKMDDGTVKTFLGWRSQHNSALGPYKGGVRYHPNVTMNEVIALSMWMTWKNSLAGLPYGGGKGGVRVNPKILSPRELELLSRKYFESISDIVGVDQDIPAPDVYTDPQVMSWFLDEYNRVKRGQFFGVVTGKPVELGGLNARIVSTGYGVAVSTRVAAEKFLGGLEGRTVAVQGYGNVGYYAAKFLAEMGAKIVAVSDSRGGIYDPEGIDPEEALKVKRSTGTVANYQRGKKISTMEILELPVDILVPAAIEEVITDENADRIKAKIISEGANGPTTTAAEKILVKKGVLVLPDILANAGGVIMSHIEWVNNRMGGWITDEEALKKLEQKMVENTKTVITYWEKNLKPEENSLRDAAYMIAVERVFRAMKLRGWI</sequence>
<gene>
    <name type="primary">gdhA</name>
    <name type="ordered locus">APE_1386.1</name>
</gene>
<feature type="chain" id="PRO_0000182754" description="Glutamate dehydrogenase">
    <location>
        <begin position="1"/>
        <end position="418"/>
    </location>
</feature>
<feature type="active site" evidence="3">
    <location>
        <position position="105"/>
    </location>
</feature>
<feature type="binding site" evidence="2">
    <location>
        <begin position="217"/>
        <end position="223"/>
    </location>
    <ligand>
        <name>NAD(+)</name>
        <dbReference type="ChEBI" id="CHEBI:57540"/>
    </ligand>
</feature>
<protein>
    <recommendedName>
        <fullName>Glutamate dehydrogenase</fullName>
        <shortName>GDH</shortName>
        <ecNumber>1.4.1.3</ecNumber>
    </recommendedName>
</protein>
<accession>Q9YC65</accession>
<proteinExistence type="inferred from homology"/>
<reference key="1">
    <citation type="journal article" date="1999" name="DNA Res.">
        <title>Complete genome sequence of an aerobic hyper-thermophilic crenarchaeon, Aeropyrum pernix K1.</title>
        <authorList>
            <person name="Kawarabayasi Y."/>
            <person name="Hino Y."/>
            <person name="Horikawa H."/>
            <person name="Yamazaki S."/>
            <person name="Haikawa Y."/>
            <person name="Jin-no K."/>
            <person name="Takahashi M."/>
            <person name="Sekine M."/>
            <person name="Baba S."/>
            <person name="Ankai A."/>
            <person name="Kosugi H."/>
            <person name="Hosoyama A."/>
            <person name="Fukui S."/>
            <person name="Nagai Y."/>
            <person name="Nishijima K."/>
            <person name="Nakazawa H."/>
            <person name="Takamiya M."/>
            <person name="Masuda S."/>
            <person name="Funahashi T."/>
            <person name="Tanaka T."/>
            <person name="Kudoh Y."/>
            <person name="Yamazaki J."/>
            <person name="Kushida N."/>
            <person name="Oguchi A."/>
            <person name="Aoki K."/>
            <person name="Kubota K."/>
            <person name="Nakamura Y."/>
            <person name="Nomura N."/>
            <person name="Sako Y."/>
            <person name="Kikuchi H."/>
        </authorList>
    </citation>
    <scope>NUCLEOTIDE SEQUENCE [LARGE SCALE GENOMIC DNA]</scope>
    <source>
        <strain>ATCC 700893 / DSM 11879 / JCM 9820 / NBRC 100138 / K1</strain>
    </source>
</reference>
<keyword id="KW-0963">Cytoplasm</keyword>
<keyword id="KW-0520">NAD</keyword>
<keyword id="KW-0521">NADP</keyword>
<keyword id="KW-0560">Oxidoreductase</keyword>
<keyword id="KW-1185">Reference proteome</keyword>
<dbReference type="EC" id="1.4.1.3"/>
<dbReference type="EMBL" id="BA000002">
    <property type="protein sequence ID" value="BAA80383.2"/>
    <property type="molecule type" value="Genomic_DNA"/>
</dbReference>
<dbReference type="PIR" id="A72616">
    <property type="entry name" value="A72616"/>
</dbReference>
<dbReference type="RefSeq" id="WP_010866338.1">
    <property type="nucleotide sequence ID" value="NC_000854.2"/>
</dbReference>
<dbReference type="SMR" id="Q9YC65"/>
<dbReference type="STRING" id="272557.APE_1386.1"/>
<dbReference type="EnsemblBacteria" id="BAA80383">
    <property type="protein sequence ID" value="BAA80383"/>
    <property type="gene ID" value="APE_1386.1"/>
</dbReference>
<dbReference type="GeneID" id="1445984"/>
<dbReference type="KEGG" id="ape:APE_1386.1"/>
<dbReference type="eggNOG" id="arCOG01352">
    <property type="taxonomic scope" value="Archaea"/>
</dbReference>
<dbReference type="BRENDA" id="1.4.1.4">
    <property type="organism ID" value="171"/>
</dbReference>
<dbReference type="Proteomes" id="UP000002518">
    <property type="component" value="Chromosome"/>
</dbReference>
<dbReference type="GO" id="GO:0005737">
    <property type="term" value="C:cytoplasm"/>
    <property type="evidence" value="ECO:0007669"/>
    <property type="project" value="UniProtKB-SubCell"/>
</dbReference>
<dbReference type="GO" id="GO:0004352">
    <property type="term" value="F:glutamate dehydrogenase (NAD+) activity"/>
    <property type="evidence" value="ECO:0007669"/>
    <property type="project" value="RHEA"/>
</dbReference>
<dbReference type="GO" id="GO:0004354">
    <property type="term" value="F:glutamate dehydrogenase (NADP+) activity"/>
    <property type="evidence" value="ECO:0007669"/>
    <property type="project" value="RHEA"/>
</dbReference>
<dbReference type="GO" id="GO:0006538">
    <property type="term" value="P:glutamate catabolic process"/>
    <property type="evidence" value="ECO:0007669"/>
    <property type="project" value="TreeGrafter"/>
</dbReference>
<dbReference type="CDD" id="cd01076">
    <property type="entry name" value="NAD_bind_1_Glu_DH"/>
    <property type="match status" value="1"/>
</dbReference>
<dbReference type="Gene3D" id="3.40.50.10860">
    <property type="entry name" value="Leucine Dehydrogenase, chain A, domain 1"/>
    <property type="match status" value="1"/>
</dbReference>
<dbReference type="Gene3D" id="3.40.50.720">
    <property type="entry name" value="NAD(P)-binding Rossmann-like Domain"/>
    <property type="match status" value="1"/>
</dbReference>
<dbReference type="InterPro" id="IPR046346">
    <property type="entry name" value="Aminoacid_DH-like_N_sf"/>
</dbReference>
<dbReference type="InterPro" id="IPR006095">
    <property type="entry name" value="Glu/Leu/Phe/Val/Trp_DH"/>
</dbReference>
<dbReference type="InterPro" id="IPR006096">
    <property type="entry name" value="Glu/Leu/Phe/Val/Trp_DH_C"/>
</dbReference>
<dbReference type="InterPro" id="IPR006097">
    <property type="entry name" value="Glu/Leu/Phe/Val/Trp_DH_dimer"/>
</dbReference>
<dbReference type="InterPro" id="IPR033524">
    <property type="entry name" value="Glu/Leu/Phe/Val_DH_AS"/>
</dbReference>
<dbReference type="InterPro" id="IPR014362">
    <property type="entry name" value="Glu_DH"/>
</dbReference>
<dbReference type="InterPro" id="IPR036291">
    <property type="entry name" value="NAD(P)-bd_dom_sf"/>
</dbReference>
<dbReference type="InterPro" id="IPR033922">
    <property type="entry name" value="NAD_bind_Glu_DH"/>
</dbReference>
<dbReference type="PANTHER" id="PTHR11606">
    <property type="entry name" value="GLUTAMATE DEHYDROGENASE"/>
    <property type="match status" value="1"/>
</dbReference>
<dbReference type="PANTHER" id="PTHR11606:SF13">
    <property type="entry name" value="GLUTAMATE DEHYDROGENASE 1, MITOCHONDRIAL"/>
    <property type="match status" value="1"/>
</dbReference>
<dbReference type="Pfam" id="PF00208">
    <property type="entry name" value="ELFV_dehydrog"/>
    <property type="match status" value="1"/>
</dbReference>
<dbReference type="Pfam" id="PF02812">
    <property type="entry name" value="ELFV_dehydrog_N"/>
    <property type="match status" value="1"/>
</dbReference>
<dbReference type="PIRSF" id="PIRSF000185">
    <property type="entry name" value="Glu_DH"/>
    <property type="match status" value="1"/>
</dbReference>
<dbReference type="PRINTS" id="PR00082">
    <property type="entry name" value="GLFDHDRGNASE"/>
</dbReference>
<dbReference type="SMART" id="SM00839">
    <property type="entry name" value="ELFV_dehydrog"/>
    <property type="match status" value="1"/>
</dbReference>
<dbReference type="SUPFAM" id="SSF53223">
    <property type="entry name" value="Aminoacid dehydrogenase-like, N-terminal domain"/>
    <property type="match status" value="1"/>
</dbReference>
<dbReference type="SUPFAM" id="SSF51735">
    <property type="entry name" value="NAD(P)-binding Rossmann-fold domains"/>
    <property type="match status" value="1"/>
</dbReference>
<dbReference type="PROSITE" id="PS00074">
    <property type="entry name" value="GLFV_DEHYDROGENASE"/>
    <property type="match status" value="1"/>
</dbReference>